<sequence length="329" mass="36373">MTCEVKEKGRVGTINPIFTCQPAGAQFVSIGIKDCIGIVHGGQGCVMFVRLIFSQHYKESFELASSSLHEDGAVFGPCGRVEEAVDVLLSRYPDVKVVPIITTCSTEIIGDDVDGVIKKLNEGLLKEKFPDREVHLIAMHTPSFVGSMISGYDVAVRDVVRHFAKREAPNDKINLLTGWVNPGDVKELKHLLGEMDIEANVLFEIESFDSPHSADGSLVSHGNTHHRGSDRHRQCPTFPEPLRRHQGRRVSAEEIRRSRRSSARPRSHPQYRHLPAEPEEGDGKPIPQSLAHERGVAIDALADLTHMFLAEKRVAIYGAPDLVIGLAEF</sequence>
<comment type="function">
    <text>This iron-iron protein is part of the nitrogenase complex that catalyzes the key enzymatic reactions in nitrogen fixation. Other nitrogenase complexes utilize a molybdenum-iron protein or a vanadium-iron protein.</text>
</comment>
<comment type="catalytic activity">
    <reaction>
        <text>N2 + 8 reduced [2Fe-2S]-[ferredoxin] + 16 ATP + 16 H2O = H2 + 8 oxidized [2Fe-2S]-[ferredoxin] + 2 NH4(+) + 16 ADP + 16 phosphate + 6 H(+)</text>
        <dbReference type="Rhea" id="RHEA:21448"/>
        <dbReference type="Rhea" id="RHEA-COMP:10000"/>
        <dbReference type="Rhea" id="RHEA-COMP:10001"/>
        <dbReference type="ChEBI" id="CHEBI:15377"/>
        <dbReference type="ChEBI" id="CHEBI:15378"/>
        <dbReference type="ChEBI" id="CHEBI:17997"/>
        <dbReference type="ChEBI" id="CHEBI:18276"/>
        <dbReference type="ChEBI" id="CHEBI:28938"/>
        <dbReference type="ChEBI" id="CHEBI:30616"/>
        <dbReference type="ChEBI" id="CHEBI:33737"/>
        <dbReference type="ChEBI" id="CHEBI:33738"/>
        <dbReference type="ChEBI" id="CHEBI:43474"/>
        <dbReference type="ChEBI" id="CHEBI:456216"/>
        <dbReference type="EC" id="1.18.6.1"/>
    </reaction>
</comment>
<comment type="cofactor">
    <cofactor evidence="1">
        <name>[8Fe-7S] cluster</name>
        <dbReference type="ChEBI" id="CHEBI:21143"/>
    </cofactor>
    <text evidence="1">Binds 1 [8Fe-7S] cluster per heterodimer.</text>
</comment>
<comment type="subunit">
    <text evidence="1">Hexamer of two alpha, two beta, and two delta chains.</text>
</comment>
<comment type="similarity">
    <text evidence="3">Belongs to the NifD/NifK/NifE/NifN family.</text>
</comment>
<feature type="chain" id="PRO_0000153096" description="Nitrogenase iron-iron protein beta chain">
    <location>
        <begin position="1"/>
        <end position="329" status="greater than"/>
    </location>
</feature>
<feature type="region of interest" description="Disordered" evidence="2">
    <location>
        <begin position="213"/>
        <end position="288"/>
    </location>
</feature>
<feature type="compositionally biased region" description="Basic residues" evidence="2">
    <location>
        <begin position="257"/>
        <end position="271"/>
    </location>
</feature>
<feature type="binding site" evidence="1">
    <location>
        <position position="20"/>
    </location>
    <ligand>
        <name>[8Fe-7S] cluster</name>
        <dbReference type="ChEBI" id="CHEBI:21143"/>
        <note>ligand shared with alpha chain</note>
    </ligand>
</feature>
<feature type="binding site" evidence="1">
    <location>
        <position position="45"/>
    </location>
    <ligand>
        <name>[8Fe-7S] cluster</name>
        <dbReference type="ChEBI" id="CHEBI:21143"/>
        <note>ligand shared with alpha chain</note>
    </ligand>
</feature>
<feature type="binding site" evidence="1">
    <location>
        <position position="104"/>
    </location>
    <ligand>
        <name>[8Fe-7S] cluster</name>
        <dbReference type="ChEBI" id="CHEBI:21143"/>
        <note>ligand shared with alpha chain</note>
    </ligand>
</feature>
<feature type="binding site" evidence="1">
    <location>
        <position position="143"/>
    </location>
    <ligand>
        <name>[8Fe-7S] cluster</name>
        <dbReference type="ChEBI" id="CHEBI:21143"/>
        <note>ligand shared with alpha chain</note>
    </ligand>
</feature>
<feature type="non-terminal residue">
    <location>
        <position position="329"/>
    </location>
</feature>
<keyword id="KW-0067">ATP-binding</keyword>
<keyword id="KW-0408">Iron</keyword>
<keyword id="KW-0411">Iron-sulfur</keyword>
<keyword id="KW-0479">Metal-binding</keyword>
<keyword id="KW-0535">Nitrogen fixation</keyword>
<keyword id="KW-0547">Nucleotide-binding</keyword>
<keyword id="KW-0560">Oxidoreductase</keyword>
<name>ANFK_RUMHU</name>
<organism>
    <name type="scientific">Ruminiclostridium hungatei</name>
    <name type="common">Clostridium hungatei</name>
    <dbReference type="NCBI Taxonomy" id="48256"/>
    <lineage>
        <taxon>Bacteria</taxon>
        <taxon>Bacillati</taxon>
        <taxon>Bacillota</taxon>
        <taxon>Clostridia</taxon>
        <taxon>Eubacteriales</taxon>
        <taxon>Oscillospiraceae</taxon>
        <taxon>Ruminiclostridium</taxon>
    </lineage>
</organism>
<evidence type="ECO:0000250" key="1"/>
<evidence type="ECO:0000256" key="2">
    <source>
        <dbReference type="SAM" id="MobiDB-lite"/>
    </source>
</evidence>
<evidence type="ECO:0000305" key="3"/>
<proteinExistence type="inferred from homology"/>
<reference key="1">
    <citation type="submission" date="1996-05" db="EMBL/GenBank/DDBJ databases">
        <authorList>
            <person name="Chen T."/>
            <person name="Leschine S.B."/>
        </authorList>
    </citation>
    <scope>NUCLEOTIDE SEQUENCE [GENOMIC DNA]</scope>
    <source>
        <strain>B3B</strain>
    </source>
</reference>
<dbReference type="EC" id="1.18.6.1"/>
<dbReference type="EMBL" id="U59415">
    <property type="protein sequence ID" value="AAB02937.1"/>
    <property type="molecule type" value="Genomic_DNA"/>
</dbReference>
<dbReference type="SMR" id="Q46084"/>
<dbReference type="GO" id="GO:0005524">
    <property type="term" value="F:ATP binding"/>
    <property type="evidence" value="ECO:0007669"/>
    <property type="project" value="UniProtKB-KW"/>
</dbReference>
<dbReference type="GO" id="GO:0051536">
    <property type="term" value="F:iron-sulfur cluster binding"/>
    <property type="evidence" value="ECO:0007669"/>
    <property type="project" value="UniProtKB-KW"/>
</dbReference>
<dbReference type="GO" id="GO:0046872">
    <property type="term" value="F:metal ion binding"/>
    <property type="evidence" value="ECO:0007669"/>
    <property type="project" value="UniProtKB-KW"/>
</dbReference>
<dbReference type="GO" id="GO:0016163">
    <property type="term" value="F:nitrogenase activity"/>
    <property type="evidence" value="ECO:0007669"/>
    <property type="project" value="UniProtKB-EC"/>
</dbReference>
<dbReference type="GO" id="GO:0009399">
    <property type="term" value="P:nitrogen fixation"/>
    <property type="evidence" value="ECO:0007669"/>
    <property type="project" value="UniProtKB-KW"/>
</dbReference>
<dbReference type="Gene3D" id="3.40.50.1980">
    <property type="entry name" value="Nitrogenase molybdenum iron protein domain"/>
    <property type="match status" value="3"/>
</dbReference>
<dbReference type="Gene3D" id="1.20.89.10">
    <property type="entry name" value="Nitrogenase Molybdenum-iron Protein, subunit B, domain 4"/>
    <property type="match status" value="1"/>
</dbReference>
<dbReference type="InterPro" id="IPR050152">
    <property type="entry name" value="ChlB/BchB/BchZ"/>
</dbReference>
<dbReference type="InterPro" id="IPR000510">
    <property type="entry name" value="Nase/OxRdtase_comp1"/>
</dbReference>
<dbReference type="InterPro" id="IPR000318">
    <property type="entry name" value="Nase_comp1_CS"/>
</dbReference>
<dbReference type="PANTHER" id="PTHR33712">
    <property type="entry name" value="LIGHT-INDEPENDENT PROTOCHLOROPHYLLIDE REDUCTASE SUBUNIT B"/>
    <property type="match status" value="1"/>
</dbReference>
<dbReference type="PANTHER" id="PTHR33712:SF7">
    <property type="entry name" value="LIGHT-INDEPENDENT PROTOCHLOROPHYLLIDE REDUCTASE SUBUNIT B"/>
    <property type="match status" value="1"/>
</dbReference>
<dbReference type="Pfam" id="PF00148">
    <property type="entry name" value="Oxidored_nitro"/>
    <property type="match status" value="2"/>
</dbReference>
<dbReference type="SUPFAM" id="SSF53807">
    <property type="entry name" value="Helical backbone' metal receptor"/>
    <property type="match status" value="1"/>
</dbReference>
<dbReference type="PROSITE" id="PS00699">
    <property type="entry name" value="NITROGENASE_1_1"/>
    <property type="match status" value="1"/>
</dbReference>
<dbReference type="PROSITE" id="PS00090">
    <property type="entry name" value="NITROGENASE_1_2"/>
    <property type="match status" value="1"/>
</dbReference>
<accession>Q46084</accession>
<gene>
    <name type="primary">anfK</name>
</gene>
<protein>
    <recommendedName>
        <fullName>Nitrogenase iron-iron protein beta chain</fullName>
        <ecNumber>1.18.6.1</ecNumber>
    </recommendedName>
    <alternativeName>
        <fullName>Dinitrogenase 3 subunit beta</fullName>
    </alternativeName>
    <alternativeName>
        <fullName>Nitrogenase component I</fullName>
    </alternativeName>
</protein>